<name>AEP1_OLIMR</name>
<proteinExistence type="evidence at protein level"/>
<accession>P15228</accession>
<accession>Q9Y0B8</accession>
<feature type="signal peptide" evidence="2">
    <location>
        <begin position="1"/>
        <end position="21"/>
    </location>
</feature>
<feature type="chain" id="PRO_0000035212" description="Toxin BmKAEP">
    <location>
        <begin position="22"/>
        <end position="82"/>
    </location>
</feature>
<feature type="domain" description="LCN-type CS-alpha/beta" evidence="1">
    <location>
        <begin position="22"/>
        <end position="82"/>
    </location>
</feature>
<feature type="modified residue" description="Glycine amide" evidence="2">
    <location>
        <position position="82"/>
    </location>
</feature>
<feature type="disulfide bond" evidence="1">
    <location>
        <begin position="31"/>
        <end position="81"/>
    </location>
</feature>
<feature type="disulfide bond" evidence="1">
    <location>
        <begin position="35"/>
        <end position="56"/>
    </location>
</feature>
<feature type="disulfide bond" evidence="1">
    <location>
        <begin position="42"/>
        <end position="63"/>
    </location>
</feature>
<feature type="disulfide bond" evidence="1">
    <location>
        <begin position="46"/>
        <end position="65"/>
    </location>
</feature>
<feature type="sequence conflict" description="In Ref. 2; AA sequence." evidence="4" ref="2">
    <original>NG</original>
    <variation>DN</variation>
    <location>
        <begin position="29"/>
        <end position="30"/>
    </location>
</feature>
<feature type="sequence conflict" description="In Ref. 2; AA sequence." evidence="4" ref="2">
    <original>W</original>
    <variation>V</variation>
    <location>
        <position position="59"/>
    </location>
</feature>
<feature type="sequence conflict" description="In Ref. 2; AA sequence." evidence="4" ref="2">
    <original>CW</original>
    <variation>QD</variation>
    <location>
        <begin position="63"/>
        <end position="64"/>
    </location>
</feature>
<feature type="sequence conflict" description="In Ref. 1; AA sequence and 2; AA sequence." evidence="4" ref="1 2">
    <original>Q</original>
    <variation>E</variation>
    <location>
        <position position="66"/>
    </location>
</feature>
<feature type="sequence conflict" description="In Ref. 2; AA sequence." evidence="4" ref="2">
    <original>D</original>
    <variation>T</variation>
    <location>
        <position position="71"/>
    </location>
</feature>
<sequence>MKLFLLLVISASMLIDGLVNADGYIRGSNGCKVSCLLGNEGCNKECRAYGASYGYCWTWKLACWCQGLPDDKTWKSESNTCGGKK</sequence>
<reference key="1">
    <citation type="journal article" date="2001" name="Eur. J. Biochem.">
        <title>Molecular characterization of an anti-epilepsy peptide from the scorpion Buthus martensi Karsch.</title>
        <authorList>
            <person name="Wang C.-G."/>
            <person name="He X.-L."/>
            <person name="Shao F."/>
            <person name="Liu W."/>
            <person name="Ling M.-H."/>
            <person name="Wang D.-C."/>
            <person name="Chi C.-W."/>
        </authorList>
    </citation>
    <scope>NUCLEOTIDE SEQUENCE [MRNA]</scope>
    <scope>PROTEIN SEQUENCE OF 22-75</scope>
    <scope>AMIDATION AT GLY-82</scope>
    <scope>FUNCTION</scope>
    <scope>MASS SPECTROMETRY</scope>
    <source>
        <tissue>Venom</tissue>
        <tissue>Venom gland</tissue>
    </source>
</reference>
<reference key="2">
    <citation type="journal article" date="1989" name="Biochem. J.">
        <title>Purification and N-terminal partial sequence of anti-epilepsy peptide from venom of the scorpion Buthus martensii Karsch.</title>
        <authorList>
            <person name="Zhou X.-H."/>
            <person name="Yang D."/>
            <person name="Zhang J.-H."/>
            <person name="Liu C.-M."/>
            <person name="Lei K.-J."/>
        </authorList>
    </citation>
    <scope>PRELIMINARY PROTEIN SEQUENCE OF 22-71</scope>
    <scope>FUNCTION</scope>
    <source>
        <tissue>Venom</tissue>
    </source>
</reference>
<evidence type="ECO:0000255" key="1">
    <source>
        <dbReference type="PROSITE-ProRule" id="PRU01210"/>
    </source>
</evidence>
<evidence type="ECO:0000269" key="2">
    <source>
    </source>
</evidence>
<evidence type="ECO:0000269" key="3">
    <source>
    </source>
</evidence>
<evidence type="ECO:0000305" key="4"/>
<keyword id="KW-0027">Amidation</keyword>
<keyword id="KW-0903">Direct protein sequencing</keyword>
<keyword id="KW-1015">Disulfide bond</keyword>
<keyword id="KW-0872">Ion channel impairing toxin</keyword>
<keyword id="KW-0528">Neurotoxin</keyword>
<keyword id="KW-0964">Secreted</keyword>
<keyword id="KW-0732">Signal</keyword>
<keyword id="KW-0800">Toxin</keyword>
<keyword id="KW-0738">Voltage-gated sodium channel impairing toxin</keyword>
<dbReference type="EMBL" id="AF160868">
    <property type="protein sequence ID" value="AAD43570.2"/>
    <property type="molecule type" value="mRNA"/>
</dbReference>
<dbReference type="PIR" id="S02174">
    <property type="entry name" value="S02174"/>
</dbReference>
<dbReference type="SMR" id="P15228"/>
<dbReference type="GO" id="GO:0005576">
    <property type="term" value="C:extracellular region"/>
    <property type="evidence" value="ECO:0000314"/>
    <property type="project" value="UniProtKB"/>
</dbReference>
<dbReference type="GO" id="GO:0019871">
    <property type="term" value="F:sodium channel inhibitor activity"/>
    <property type="evidence" value="ECO:0000303"/>
    <property type="project" value="UniProtKB"/>
</dbReference>
<dbReference type="GO" id="GO:0090729">
    <property type="term" value="F:toxin activity"/>
    <property type="evidence" value="ECO:0007669"/>
    <property type="project" value="UniProtKB-KW"/>
</dbReference>
<dbReference type="GO" id="GO:0006952">
    <property type="term" value="P:defense response"/>
    <property type="evidence" value="ECO:0007669"/>
    <property type="project" value="InterPro"/>
</dbReference>
<dbReference type="CDD" id="cd23106">
    <property type="entry name" value="neurotoxins_LC_scorpion"/>
    <property type="match status" value="1"/>
</dbReference>
<dbReference type="FunFam" id="3.30.30.10:FF:000002">
    <property type="entry name" value="Alpha-like toxin BmK-M1"/>
    <property type="match status" value="1"/>
</dbReference>
<dbReference type="Gene3D" id="3.30.30.10">
    <property type="entry name" value="Knottin, scorpion toxin-like"/>
    <property type="match status" value="1"/>
</dbReference>
<dbReference type="InterPro" id="IPR044062">
    <property type="entry name" value="LCN-type_CS_alpha_beta_dom"/>
</dbReference>
<dbReference type="InterPro" id="IPR003614">
    <property type="entry name" value="Scorpion_toxin-like"/>
</dbReference>
<dbReference type="InterPro" id="IPR036574">
    <property type="entry name" value="Scorpion_toxin-like_sf"/>
</dbReference>
<dbReference type="InterPro" id="IPR018218">
    <property type="entry name" value="Scorpion_toxinL"/>
</dbReference>
<dbReference type="InterPro" id="IPR002061">
    <property type="entry name" value="Scorpion_toxinL/defensin"/>
</dbReference>
<dbReference type="Pfam" id="PF00537">
    <property type="entry name" value="Toxin_3"/>
    <property type="match status" value="1"/>
</dbReference>
<dbReference type="PRINTS" id="PR00285">
    <property type="entry name" value="SCORPNTOXIN"/>
</dbReference>
<dbReference type="SMART" id="SM00505">
    <property type="entry name" value="Knot1"/>
    <property type="match status" value="1"/>
</dbReference>
<dbReference type="SUPFAM" id="SSF57095">
    <property type="entry name" value="Scorpion toxin-like"/>
    <property type="match status" value="1"/>
</dbReference>
<dbReference type="PROSITE" id="PS51863">
    <property type="entry name" value="LCN_CSAB"/>
    <property type="match status" value="1"/>
</dbReference>
<comment type="function">
    <text evidence="2 3">Shows anti-epileptic activity. Shares high homology with depressant insect toxins, but shows very weak toxicity against mammals and insects and no obvious symptoms on insect larvae. May target voltage-gated sodium channel (Nav).</text>
</comment>
<comment type="subcellular location">
    <subcellularLocation>
        <location>Secreted</location>
    </subcellularLocation>
</comment>
<comment type="tissue specificity">
    <text>Expressed by the venom gland.</text>
</comment>
<comment type="domain">
    <text evidence="4">Has the structural arrangement of an alpha-helix connected to antiparallel beta-sheets by disulfide bonds (CS-alpha/beta).</text>
</comment>
<comment type="mass spectrometry"/>
<comment type="similarity">
    <text evidence="4">Belongs to the long (4 C-C) scorpion toxin superfamily. Sodium channel inhibitor family. Beta subfamily.</text>
</comment>
<organism>
    <name type="scientific">Olivierus martensii</name>
    <name type="common">Manchurian scorpion</name>
    <name type="synonym">Mesobuthus martensii</name>
    <dbReference type="NCBI Taxonomy" id="34649"/>
    <lineage>
        <taxon>Eukaryota</taxon>
        <taxon>Metazoa</taxon>
        <taxon>Ecdysozoa</taxon>
        <taxon>Arthropoda</taxon>
        <taxon>Chelicerata</taxon>
        <taxon>Arachnida</taxon>
        <taxon>Scorpiones</taxon>
        <taxon>Buthida</taxon>
        <taxon>Buthoidea</taxon>
        <taxon>Buthidae</taxon>
        <taxon>Olivierus</taxon>
    </lineage>
</organism>
<protein>
    <recommendedName>
        <fullName>Toxin BmKAEP</fullName>
    </recommendedName>
    <alternativeName>
        <fullName>Anti-epilepsy peptide</fullName>
    </alternativeName>
    <alternativeName>
        <fullName>BmK AEP</fullName>
    </alternativeName>
</protein>